<name>PDXT_DEHM1</name>
<reference key="1">
    <citation type="journal article" date="2005" name="Science">
        <title>Genome sequence of the PCE-dechlorinating bacterium Dehalococcoides ethenogenes.</title>
        <authorList>
            <person name="Seshadri R."/>
            <person name="Adrian L."/>
            <person name="Fouts D.E."/>
            <person name="Eisen J.A."/>
            <person name="Phillippy A.M."/>
            <person name="Methe B.A."/>
            <person name="Ward N.L."/>
            <person name="Nelson W.C."/>
            <person name="DeBoy R.T."/>
            <person name="Khouri H.M."/>
            <person name="Kolonay J.F."/>
            <person name="Dodson R.J."/>
            <person name="Daugherty S.C."/>
            <person name="Brinkac L.M."/>
            <person name="Sullivan S.A."/>
            <person name="Madupu R."/>
            <person name="Nelson K.E."/>
            <person name="Kang K.H."/>
            <person name="Impraim M."/>
            <person name="Tran K."/>
            <person name="Robinson J.M."/>
            <person name="Forberger H.A."/>
            <person name="Fraser C.M."/>
            <person name="Zinder S.H."/>
            <person name="Heidelberg J.F."/>
        </authorList>
    </citation>
    <scope>NUCLEOTIDE SEQUENCE [LARGE SCALE GENOMIC DNA]</scope>
    <source>
        <strain>ATCC BAA-2266 / KCTC 15142 / 195</strain>
    </source>
</reference>
<proteinExistence type="inferred from homology"/>
<dbReference type="EC" id="4.3.3.6" evidence="1"/>
<dbReference type="EC" id="3.5.1.2" evidence="1"/>
<dbReference type="EMBL" id="CP000027">
    <property type="protein sequence ID" value="AAW40109.1"/>
    <property type="molecule type" value="Genomic_DNA"/>
</dbReference>
<dbReference type="RefSeq" id="WP_010936373.1">
    <property type="nucleotide sequence ID" value="NC_002936.3"/>
</dbReference>
<dbReference type="SMR" id="Q3Z8V9"/>
<dbReference type="FunCoup" id="Q3Z8V9">
    <property type="interactions" value="145"/>
</dbReference>
<dbReference type="STRING" id="243164.DET0598"/>
<dbReference type="MEROPS" id="C26.A32"/>
<dbReference type="GeneID" id="3230072"/>
<dbReference type="KEGG" id="det:DET0598"/>
<dbReference type="PATRIC" id="fig|243164.10.peg.576"/>
<dbReference type="eggNOG" id="COG0311">
    <property type="taxonomic scope" value="Bacteria"/>
</dbReference>
<dbReference type="HOGENOM" id="CLU_069674_2_0_0"/>
<dbReference type="InParanoid" id="Q3Z8V9"/>
<dbReference type="UniPathway" id="UPA00245"/>
<dbReference type="Proteomes" id="UP000008289">
    <property type="component" value="Chromosome"/>
</dbReference>
<dbReference type="GO" id="GO:0005829">
    <property type="term" value="C:cytosol"/>
    <property type="evidence" value="ECO:0007669"/>
    <property type="project" value="TreeGrafter"/>
</dbReference>
<dbReference type="GO" id="GO:1903600">
    <property type="term" value="C:glutaminase complex"/>
    <property type="evidence" value="ECO:0007669"/>
    <property type="project" value="TreeGrafter"/>
</dbReference>
<dbReference type="GO" id="GO:0004359">
    <property type="term" value="F:glutaminase activity"/>
    <property type="evidence" value="ECO:0007669"/>
    <property type="project" value="UniProtKB-UniRule"/>
</dbReference>
<dbReference type="GO" id="GO:0036381">
    <property type="term" value="F:pyridoxal 5'-phosphate synthase (glutamine hydrolysing) activity"/>
    <property type="evidence" value="ECO:0007669"/>
    <property type="project" value="UniProtKB-UniRule"/>
</dbReference>
<dbReference type="GO" id="GO:0006543">
    <property type="term" value="P:glutamine catabolic process"/>
    <property type="evidence" value="ECO:0007669"/>
    <property type="project" value="UniProtKB-UniRule"/>
</dbReference>
<dbReference type="GO" id="GO:0042823">
    <property type="term" value="P:pyridoxal phosphate biosynthetic process"/>
    <property type="evidence" value="ECO:0007669"/>
    <property type="project" value="UniProtKB-UniRule"/>
</dbReference>
<dbReference type="GO" id="GO:0008614">
    <property type="term" value="P:pyridoxine metabolic process"/>
    <property type="evidence" value="ECO:0007669"/>
    <property type="project" value="TreeGrafter"/>
</dbReference>
<dbReference type="CDD" id="cd01749">
    <property type="entry name" value="GATase1_PB"/>
    <property type="match status" value="1"/>
</dbReference>
<dbReference type="FunFam" id="3.40.50.880:FF:000010">
    <property type="entry name" value="uncharacterized protein LOC100176842 isoform X2"/>
    <property type="match status" value="1"/>
</dbReference>
<dbReference type="Gene3D" id="3.40.50.880">
    <property type="match status" value="1"/>
</dbReference>
<dbReference type="HAMAP" id="MF_01615">
    <property type="entry name" value="PdxT"/>
    <property type="match status" value="1"/>
</dbReference>
<dbReference type="InterPro" id="IPR029062">
    <property type="entry name" value="Class_I_gatase-like"/>
</dbReference>
<dbReference type="InterPro" id="IPR002161">
    <property type="entry name" value="PdxT/SNO"/>
</dbReference>
<dbReference type="InterPro" id="IPR021196">
    <property type="entry name" value="PdxT/SNO_CS"/>
</dbReference>
<dbReference type="NCBIfam" id="TIGR03800">
    <property type="entry name" value="PLP_synth_Pdx2"/>
    <property type="match status" value="1"/>
</dbReference>
<dbReference type="PANTHER" id="PTHR31559">
    <property type="entry name" value="PYRIDOXAL 5'-PHOSPHATE SYNTHASE SUBUNIT SNO"/>
    <property type="match status" value="1"/>
</dbReference>
<dbReference type="PANTHER" id="PTHR31559:SF0">
    <property type="entry name" value="PYRIDOXAL 5'-PHOSPHATE SYNTHASE SUBUNIT SNO1-RELATED"/>
    <property type="match status" value="1"/>
</dbReference>
<dbReference type="Pfam" id="PF01174">
    <property type="entry name" value="SNO"/>
    <property type="match status" value="1"/>
</dbReference>
<dbReference type="PIRSF" id="PIRSF005639">
    <property type="entry name" value="Glut_amidoT_SNO"/>
    <property type="match status" value="1"/>
</dbReference>
<dbReference type="SUPFAM" id="SSF52317">
    <property type="entry name" value="Class I glutamine amidotransferase-like"/>
    <property type="match status" value="1"/>
</dbReference>
<dbReference type="PROSITE" id="PS01236">
    <property type="entry name" value="PDXT_SNO_1"/>
    <property type="match status" value="1"/>
</dbReference>
<dbReference type="PROSITE" id="PS51130">
    <property type="entry name" value="PDXT_SNO_2"/>
    <property type="match status" value="1"/>
</dbReference>
<sequence>MKIGVLALQGAFREHINMLRTLGAEAVEVRKAEELAELSGLIIPGGESTTITKLLYTFGLAKPVKDLARNGMPVWGTCAGMICLAKELSGDISGVKTLELMDITVRRNAFGRQVDSFEAMLKVKALEGGDFPAVFIRAPLVEKTGQWVEVLAKLPDGTMVAVRENNLLATSFHPELSADNRFHRYFVQMAKDYKP</sequence>
<evidence type="ECO:0000255" key="1">
    <source>
        <dbReference type="HAMAP-Rule" id="MF_01615"/>
    </source>
</evidence>
<keyword id="KW-0315">Glutamine amidotransferase</keyword>
<keyword id="KW-0378">Hydrolase</keyword>
<keyword id="KW-0456">Lyase</keyword>
<keyword id="KW-0663">Pyridoxal phosphate</keyword>
<gene>
    <name evidence="1" type="primary">pdxT</name>
    <name type="ordered locus">DET0598</name>
</gene>
<comment type="function">
    <text evidence="1">Catalyzes the hydrolysis of glutamine to glutamate and ammonia as part of the biosynthesis of pyridoxal 5'-phosphate. The resulting ammonia molecule is channeled to the active site of PdxS.</text>
</comment>
<comment type="catalytic activity">
    <reaction evidence="1">
        <text>aldehydo-D-ribose 5-phosphate + D-glyceraldehyde 3-phosphate + L-glutamine = pyridoxal 5'-phosphate + L-glutamate + phosphate + 3 H2O + H(+)</text>
        <dbReference type="Rhea" id="RHEA:31507"/>
        <dbReference type="ChEBI" id="CHEBI:15377"/>
        <dbReference type="ChEBI" id="CHEBI:15378"/>
        <dbReference type="ChEBI" id="CHEBI:29985"/>
        <dbReference type="ChEBI" id="CHEBI:43474"/>
        <dbReference type="ChEBI" id="CHEBI:58273"/>
        <dbReference type="ChEBI" id="CHEBI:58359"/>
        <dbReference type="ChEBI" id="CHEBI:59776"/>
        <dbReference type="ChEBI" id="CHEBI:597326"/>
        <dbReference type="EC" id="4.3.3.6"/>
    </reaction>
</comment>
<comment type="catalytic activity">
    <reaction evidence="1">
        <text>L-glutamine + H2O = L-glutamate + NH4(+)</text>
        <dbReference type="Rhea" id="RHEA:15889"/>
        <dbReference type="ChEBI" id="CHEBI:15377"/>
        <dbReference type="ChEBI" id="CHEBI:28938"/>
        <dbReference type="ChEBI" id="CHEBI:29985"/>
        <dbReference type="ChEBI" id="CHEBI:58359"/>
        <dbReference type="EC" id="3.5.1.2"/>
    </reaction>
</comment>
<comment type="pathway">
    <text evidence="1">Cofactor biosynthesis; pyridoxal 5'-phosphate biosynthesis.</text>
</comment>
<comment type="subunit">
    <text evidence="1">In the presence of PdxS, forms a dodecamer of heterodimers. Only shows activity in the heterodimer.</text>
</comment>
<comment type="similarity">
    <text evidence="1">Belongs to the glutaminase PdxT/SNO family.</text>
</comment>
<feature type="chain" id="PRO_0000255828" description="Pyridoxal 5'-phosphate synthase subunit PdxT">
    <location>
        <begin position="1"/>
        <end position="195"/>
    </location>
</feature>
<feature type="active site" description="Nucleophile" evidence="1">
    <location>
        <position position="78"/>
    </location>
</feature>
<feature type="active site" description="Charge relay system" evidence="1">
    <location>
        <position position="173"/>
    </location>
</feature>
<feature type="active site" description="Charge relay system" evidence="1">
    <location>
        <position position="175"/>
    </location>
</feature>
<feature type="binding site" evidence="1">
    <location>
        <begin position="46"/>
        <end position="48"/>
    </location>
    <ligand>
        <name>L-glutamine</name>
        <dbReference type="ChEBI" id="CHEBI:58359"/>
    </ligand>
</feature>
<feature type="binding site" evidence="1">
    <location>
        <position position="107"/>
    </location>
    <ligand>
        <name>L-glutamine</name>
        <dbReference type="ChEBI" id="CHEBI:58359"/>
    </ligand>
</feature>
<feature type="binding site" evidence="1">
    <location>
        <begin position="136"/>
        <end position="137"/>
    </location>
    <ligand>
        <name>L-glutamine</name>
        <dbReference type="ChEBI" id="CHEBI:58359"/>
    </ligand>
</feature>
<protein>
    <recommendedName>
        <fullName evidence="1">Pyridoxal 5'-phosphate synthase subunit PdxT</fullName>
        <ecNumber evidence="1">4.3.3.6</ecNumber>
    </recommendedName>
    <alternativeName>
        <fullName evidence="1">Pdx2</fullName>
    </alternativeName>
    <alternativeName>
        <fullName evidence="1">Pyridoxal 5'-phosphate synthase glutaminase subunit</fullName>
        <ecNumber evidence="1">3.5.1.2</ecNumber>
    </alternativeName>
</protein>
<accession>Q3Z8V9</accession>
<organism>
    <name type="scientific">Dehalococcoides mccartyi (strain ATCC BAA-2266 / KCTC 15142 / 195)</name>
    <name type="common">Dehalococcoides ethenogenes (strain 195)</name>
    <dbReference type="NCBI Taxonomy" id="243164"/>
    <lineage>
        <taxon>Bacteria</taxon>
        <taxon>Bacillati</taxon>
        <taxon>Chloroflexota</taxon>
        <taxon>Dehalococcoidia</taxon>
        <taxon>Dehalococcoidales</taxon>
        <taxon>Dehalococcoidaceae</taxon>
        <taxon>Dehalococcoides</taxon>
    </lineage>
</organism>